<comment type="function">
    <text evidence="1">Catalyzes the 2-thiolation of uridine at the wobble position (U34) of tRNA, leading to the formation of s(2)U34.</text>
</comment>
<comment type="catalytic activity">
    <reaction evidence="1">
        <text>S-sulfanyl-L-cysteinyl-[protein] + uridine(34) in tRNA + AH2 + ATP = 2-thiouridine(34) in tRNA + L-cysteinyl-[protein] + A + AMP + diphosphate + H(+)</text>
        <dbReference type="Rhea" id="RHEA:47032"/>
        <dbReference type="Rhea" id="RHEA-COMP:10131"/>
        <dbReference type="Rhea" id="RHEA-COMP:11726"/>
        <dbReference type="Rhea" id="RHEA-COMP:11727"/>
        <dbReference type="Rhea" id="RHEA-COMP:11728"/>
        <dbReference type="ChEBI" id="CHEBI:13193"/>
        <dbReference type="ChEBI" id="CHEBI:15378"/>
        <dbReference type="ChEBI" id="CHEBI:17499"/>
        <dbReference type="ChEBI" id="CHEBI:29950"/>
        <dbReference type="ChEBI" id="CHEBI:30616"/>
        <dbReference type="ChEBI" id="CHEBI:33019"/>
        <dbReference type="ChEBI" id="CHEBI:61963"/>
        <dbReference type="ChEBI" id="CHEBI:65315"/>
        <dbReference type="ChEBI" id="CHEBI:87170"/>
        <dbReference type="ChEBI" id="CHEBI:456215"/>
        <dbReference type="EC" id="2.8.1.13"/>
    </reaction>
</comment>
<comment type="subcellular location">
    <subcellularLocation>
        <location evidence="1">Cytoplasm</location>
    </subcellularLocation>
</comment>
<comment type="similarity">
    <text evidence="1">Belongs to the MnmA/TRMU family.</text>
</comment>
<feature type="chain" id="PRO_0000349756" description="tRNA-specific 2-thiouridylase MnmA">
    <location>
        <begin position="1"/>
        <end position="396"/>
    </location>
</feature>
<feature type="region of interest" description="Interaction with target base in tRNA" evidence="1">
    <location>
        <begin position="128"/>
        <end position="130"/>
    </location>
</feature>
<feature type="region of interest" description="Interaction with tRNA" evidence="1">
    <location>
        <begin position="180"/>
        <end position="182"/>
    </location>
</feature>
<feature type="region of interest" description="Interaction with tRNA" evidence="1">
    <location>
        <begin position="342"/>
        <end position="343"/>
    </location>
</feature>
<feature type="active site" description="Nucleophile" evidence="1">
    <location>
        <position position="133"/>
    </location>
</feature>
<feature type="active site" description="Cysteine persulfide intermediate" evidence="1">
    <location>
        <position position="230"/>
    </location>
</feature>
<feature type="binding site" evidence="1">
    <location>
        <begin position="42"/>
        <end position="49"/>
    </location>
    <ligand>
        <name>ATP</name>
        <dbReference type="ChEBI" id="CHEBI:30616"/>
    </ligand>
</feature>
<feature type="binding site" evidence="1">
    <location>
        <position position="68"/>
    </location>
    <ligand>
        <name>ATP</name>
        <dbReference type="ChEBI" id="CHEBI:30616"/>
    </ligand>
</feature>
<feature type="binding site" evidence="1">
    <location>
        <position position="158"/>
    </location>
    <ligand>
        <name>ATP</name>
        <dbReference type="ChEBI" id="CHEBI:30616"/>
    </ligand>
</feature>
<feature type="site" description="Interaction with tRNA" evidence="1">
    <location>
        <position position="159"/>
    </location>
</feature>
<feature type="site" description="Interaction with tRNA" evidence="1">
    <location>
        <position position="375"/>
    </location>
</feature>
<feature type="disulfide bond" description="Alternate" evidence="1">
    <location>
        <begin position="133"/>
        <end position="230"/>
    </location>
</feature>
<protein>
    <recommendedName>
        <fullName evidence="1">tRNA-specific 2-thiouridylase MnmA</fullName>
        <ecNumber evidence="1">2.8.1.13</ecNumber>
    </recommendedName>
</protein>
<organism>
    <name type="scientific">Pseudoalteromonas atlantica (strain T6c / ATCC BAA-1087)</name>
    <dbReference type="NCBI Taxonomy" id="3042615"/>
    <lineage>
        <taxon>Bacteria</taxon>
        <taxon>Pseudomonadati</taxon>
        <taxon>Pseudomonadota</taxon>
        <taxon>Gammaproteobacteria</taxon>
        <taxon>Alteromonadales</taxon>
        <taxon>Alteromonadaceae</taxon>
        <taxon>Paraglaciecola</taxon>
    </lineage>
</organism>
<evidence type="ECO:0000255" key="1">
    <source>
        <dbReference type="HAMAP-Rule" id="MF_00144"/>
    </source>
</evidence>
<reference key="1">
    <citation type="submission" date="2006-06" db="EMBL/GenBank/DDBJ databases">
        <title>Complete sequence of Pseudoalteromonas atlantica T6c.</title>
        <authorList>
            <consortium name="US DOE Joint Genome Institute"/>
            <person name="Copeland A."/>
            <person name="Lucas S."/>
            <person name="Lapidus A."/>
            <person name="Barry K."/>
            <person name="Detter J.C."/>
            <person name="Glavina del Rio T."/>
            <person name="Hammon N."/>
            <person name="Israni S."/>
            <person name="Dalin E."/>
            <person name="Tice H."/>
            <person name="Pitluck S."/>
            <person name="Saunders E."/>
            <person name="Brettin T."/>
            <person name="Bruce D."/>
            <person name="Han C."/>
            <person name="Tapia R."/>
            <person name="Gilna P."/>
            <person name="Schmutz J."/>
            <person name="Larimer F."/>
            <person name="Land M."/>
            <person name="Hauser L."/>
            <person name="Kyrpides N."/>
            <person name="Kim E."/>
            <person name="Karls A.C."/>
            <person name="Bartlett D."/>
            <person name="Higgins B.P."/>
            <person name="Richardson P."/>
        </authorList>
    </citation>
    <scope>NUCLEOTIDE SEQUENCE [LARGE SCALE GENOMIC DNA]</scope>
    <source>
        <strain>T6c / ATCC BAA-1087</strain>
    </source>
</reference>
<accession>Q15T93</accession>
<sequence length="396" mass="44799">MRGYLLEFATIFTETLLFIMPYIHSLSATELASNSQKKVIVGMSGGVDSSVSAYILLQQGYQVEGLFMKNWEEDDNDEYCAAADDLKDAQAVADKLGIVLHQINFAAEYWDNVFEYFLEEYKSGRTPNPDIMCNKEIKFKAFLEFAAEELEADYIATGHYVRRREVDGHWQMLRGMDDNKDQSYFLYTLGEQHVGQTLFPIGDIEKPQVREIAQEQGLITHDKKDSTGICFIGERKFTDFLSQYLPAQPGVIETPEGQEIGQHQGLMYHTLGQRKGLMIGGMKEFGDDPWYVVDKDMARNVLIVGQGADHPRLYSNGLIANQLHWVDRTGPTSPMKCSVKTRYRQEDIACTLTPEPDGNVRVMFDEPQKAVTPGQSAVFYLNEVCLGGGIIESYIR</sequence>
<gene>
    <name evidence="1" type="primary">mnmA</name>
    <name type="ordered locus">Patl_2379</name>
</gene>
<name>MNMA_PSEA6</name>
<keyword id="KW-0067">ATP-binding</keyword>
<keyword id="KW-0963">Cytoplasm</keyword>
<keyword id="KW-1015">Disulfide bond</keyword>
<keyword id="KW-0547">Nucleotide-binding</keyword>
<keyword id="KW-0694">RNA-binding</keyword>
<keyword id="KW-0808">Transferase</keyword>
<keyword id="KW-0819">tRNA processing</keyword>
<keyword id="KW-0820">tRNA-binding</keyword>
<dbReference type="EC" id="2.8.1.13" evidence="1"/>
<dbReference type="EMBL" id="CP000388">
    <property type="protein sequence ID" value="ABG40895.1"/>
    <property type="molecule type" value="Genomic_DNA"/>
</dbReference>
<dbReference type="SMR" id="Q15T93"/>
<dbReference type="STRING" id="342610.Patl_2379"/>
<dbReference type="KEGG" id="pat:Patl_2379"/>
<dbReference type="eggNOG" id="COG0482">
    <property type="taxonomic scope" value="Bacteria"/>
</dbReference>
<dbReference type="HOGENOM" id="CLU_035188_1_0_6"/>
<dbReference type="Proteomes" id="UP000001981">
    <property type="component" value="Chromosome"/>
</dbReference>
<dbReference type="GO" id="GO:0005737">
    <property type="term" value="C:cytoplasm"/>
    <property type="evidence" value="ECO:0007669"/>
    <property type="project" value="UniProtKB-SubCell"/>
</dbReference>
<dbReference type="GO" id="GO:0005524">
    <property type="term" value="F:ATP binding"/>
    <property type="evidence" value="ECO:0007669"/>
    <property type="project" value="UniProtKB-KW"/>
</dbReference>
<dbReference type="GO" id="GO:0000049">
    <property type="term" value="F:tRNA binding"/>
    <property type="evidence" value="ECO:0007669"/>
    <property type="project" value="UniProtKB-KW"/>
</dbReference>
<dbReference type="GO" id="GO:0103016">
    <property type="term" value="F:tRNA-uridine 2-sulfurtransferase activity"/>
    <property type="evidence" value="ECO:0007669"/>
    <property type="project" value="UniProtKB-EC"/>
</dbReference>
<dbReference type="GO" id="GO:0002143">
    <property type="term" value="P:tRNA wobble position uridine thiolation"/>
    <property type="evidence" value="ECO:0007669"/>
    <property type="project" value="TreeGrafter"/>
</dbReference>
<dbReference type="CDD" id="cd01998">
    <property type="entry name" value="MnmA_TRMU-like"/>
    <property type="match status" value="1"/>
</dbReference>
<dbReference type="FunFam" id="2.30.30.280:FF:000001">
    <property type="entry name" value="tRNA-specific 2-thiouridylase MnmA"/>
    <property type="match status" value="1"/>
</dbReference>
<dbReference type="FunFam" id="2.40.30.10:FF:000023">
    <property type="entry name" value="tRNA-specific 2-thiouridylase MnmA"/>
    <property type="match status" value="1"/>
</dbReference>
<dbReference type="FunFam" id="3.40.50.620:FF:000004">
    <property type="entry name" value="tRNA-specific 2-thiouridylase MnmA"/>
    <property type="match status" value="1"/>
</dbReference>
<dbReference type="Gene3D" id="2.30.30.280">
    <property type="entry name" value="Adenine nucleotide alpha hydrolases-like domains"/>
    <property type="match status" value="1"/>
</dbReference>
<dbReference type="Gene3D" id="3.40.50.620">
    <property type="entry name" value="HUPs"/>
    <property type="match status" value="1"/>
</dbReference>
<dbReference type="Gene3D" id="2.40.30.10">
    <property type="entry name" value="Translation factors"/>
    <property type="match status" value="1"/>
</dbReference>
<dbReference type="HAMAP" id="MF_00144">
    <property type="entry name" value="tRNA_thiouridyl_MnmA"/>
    <property type="match status" value="1"/>
</dbReference>
<dbReference type="InterPro" id="IPR004506">
    <property type="entry name" value="MnmA-like"/>
</dbReference>
<dbReference type="InterPro" id="IPR046885">
    <property type="entry name" value="MnmA-like_C"/>
</dbReference>
<dbReference type="InterPro" id="IPR046884">
    <property type="entry name" value="MnmA-like_central"/>
</dbReference>
<dbReference type="InterPro" id="IPR023382">
    <property type="entry name" value="MnmA-like_central_sf"/>
</dbReference>
<dbReference type="InterPro" id="IPR014729">
    <property type="entry name" value="Rossmann-like_a/b/a_fold"/>
</dbReference>
<dbReference type="NCBIfam" id="NF001138">
    <property type="entry name" value="PRK00143.1"/>
    <property type="match status" value="1"/>
</dbReference>
<dbReference type="NCBIfam" id="TIGR00420">
    <property type="entry name" value="trmU"/>
    <property type="match status" value="1"/>
</dbReference>
<dbReference type="PANTHER" id="PTHR11933:SF5">
    <property type="entry name" value="MITOCHONDRIAL TRNA-SPECIFIC 2-THIOURIDYLASE 1"/>
    <property type="match status" value="1"/>
</dbReference>
<dbReference type="PANTHER" id="PTHR11933">
    <property type="entry name" value="TRNA 5-METHYLAMINOMETHYL-2-THIOURIDYLATE -METHYLTRANSFERASE"/>
    <property type="match status" value="1"/>
</dbReference>
<dbReference type="Pfam" id="PF03054">
    <property type="entry name" value="tRNA_Me_trans"/>
    <property type="match status" value="1"/>
</dbReference>
<dbReference type="Pfam" id="PF20258">
    <property type="entry name" value="tRNA_Me_trans_C"/>
    <property type="match status" value="1"/>
</dbReference>
<dbReference type="Pfam" id="PF20259">
    <property type="entry name" value="tRNA_Me_trans_M"/>
    <property type="match status" value="1"/>
</dbReference>
<dbReference type="SUPFAM" id="SSF52402">
    <property type="entry name" value="Adenine nucleotide alpha hydrolases-like"/>
    <property type="match status" value="1"/>
</dbReference>
<proteinExistence type="inferred from homology"/>